<proteinExistence type="inferred from homology"/>
<dbReference type="EC" id="4.2.1.113" evidence="1"/>
<dbReference type="EMBL" id="CP000480">
    <property type="protein sequence ID" value="ABK74303.1"/>
    <property type="molecule type" value="Genomic_DNA"/>
</dbReference>
<dbReference type="EMBL" id="CP001663">
    <property type="protein sequence ID" value="AFP37550.1"/>
    <property type="molecule type" value="Genomic_DNA"/>
</dbReference>
<dbReference type="RefSeq" id="WP_011727412.1">
    <property type="nucleotide sequence ID" value="NZ_SIJM01000011.1"/>
</dbReference>
<dbReference type="RefSeq" id="YP_885498.1">
    <property type="nucleotide sequence ID" value="NC_008596.1"/>
</dbReference>
<dbReference type="SMR" id="A0QRG0"/>
<dbReference type="STRING" id="246196.MSMEG_1103"/>
<dbReference type="PaxDb" id="246196-MSMEI_1070"/>
<dbReference type="KEGG" id="msb:LJ00_05485"/>
<dbReference type="KEGG" id="msg:MSMEI_1070"/>
<dbReference type="KEGG" id="msm:MSMEG_1103"/>
<dbReference type="PATRIC" id="fig|246196.19.peg.1091"/>
<dbReference type="eggNOG" id="COG4948">
    <property type="taxonomic scope" value="Bacteria"/>
</dbReference>
<dbReference type="OrthoDB" id="3725747at2"/>
<dbReference type="UniPathway" id="UPA00079"/>
<dbReference type="UniPathway" id="UPA01057">
    <property type="reaction ID" value="UER00165"/>
</dbReference>
<dbReference type="Proteomes" id="UP000000757">
    <property type="component" value="Chromosome"/>
</dbReference>
<dbReference type="Proteomes" id="UP000006158">
    <property type="component" value="Chromosome"/>
</dbReference>
<dbReference type="GO" id="GO:0000287">
    <property type="term" value="F:magnesium ion binding"/>
    <property type="evidence" value="ECO:0007669"/>
    <property type="project" value="UniProtKB-UniRule"/>
</dbReference>
<dbReference type="GO" id="GO:0043748">
    <property type="term" value="F:O-succinylbenzoate synthase activity"/>
    <property type="evidence" value="ECO:0007669"/>
    <property type="project" value="UniProtKB-EC"/>
</dbReference>
<dbReference type="GO" id="GO:0009234">
    <property type="term" value="P:menaquinone biosynthetic process"/>
    <property type="evidence" value="ECO:0007669"/>
    <property type="project" value="UniProtKB-UniRule"/>
</dbReference>
<dbReference type="CDD" id="cd03320">
    <property type="entry name" value="OSBS"/>
    <property type="match status" value="1"/>
</dbReference>
<dbReference type="Gene3D" id="3.20.20.120">
    <property type="entry name" value="Enolase-like C-terminal domain"/>
    <property type="match status" value="1"/>
</dbReference>
<dbReference type="HAMAP" id="MF_00470">
    <property type="entry name" value="MenC_1"/>
    <property type="match status" value="1"/>
</dbReference>
<dbReference type="InterPro" id="IPR036849">
    <property type="entry name" value="Enolase-like_C_sf"/>
</dbReference>
<dbReference type="InterPro" id="IPR029065">
    <property type="entry name" value="Enolase_C-like"/>
</dbReference>
<dbReference type="InterPro" id="IPR013342">
    <property type="entry name" value="Mandelate_racemase_C"/>
</dbReference>
<dbReference type="InterPro" id="IPR010196">
    <property type="entry name" value="OSB_synthase_MenC1"/>
</dbReference>
<dbReference type="NCBIfam" id="NF002782">
    <property type="entry name" value="PRK02901.1"/>
    <property type="match status" value="1"/>
</dbReference>
<dbReference type="PANTHER" id="PTHR48073:SF2">
    <property type="entry name" value="O-SUCCINYLBENZOATE SYNTHASE"/>
    <property type="match status" value="1"/>
</dbReference>
<dbReference type="PANTHER" id="PTHR48073">
    <property type="entry name" value="O-SUCCINYLBENZOATE SYNTHASE-RELATED"/>
    <property type="match status" value="1"/>
</dbReference>
<dbReference type="Pfam" id="PF18374">
    <property type="entry name" value="Enolase_like_N"/>
    <property type="match status" value="1"/>
</dbReference>
<dbReference type="Pfam" id="PF13378">
    <property type="entry name" value="MR_MLE_C"/>
    <property type="match status" value="1"/>
</dbReference>
<dbReference type="SFLD" id="SFLDS00001">
    <property type="entry name" value="Enolase"/>
    <property type="match status" value="1"/>
</dbReference>
<dbReference type="SFLD" id="SFLDF00009">
    <property type="entry name" value="o-succinylbenzoate_synthase"/>
    <property type="match status" value="1"/>
</dbReference>
<dbReference type="SMART" id="SM00922">
    <property type="entry name" value="MR_MLE"/>
    <property type="match status" value="1"/>
</dbReference>
<dbReference type="SUPFAM" id="SSF51604">
    <property type="entry name" value="Enolase C-terminal domain-like"/>
    <property type="match status" value="1"/>
</dbReference>
<accession>A0QRG0</accession>
<accession>I7F7K1</accession>
<protein>
    <recommendedName>
        <fullName evidence="1">o-succinylbenzoate synthase</fullName>
        <shortName evidence="1">OSB synthase</shortName>
        <shortName evidence="1">OSBS</shortName>
        <ecNumber evidence="1">4.2.1.113</ecNumber>
    </recommendedName>
    <alternativeName>
        <fullName evidence="1">4-(2'-carboxyphenyl)-4-oxybutyric acid synthase</fullName>
    </alternativeName>
    <alternativeName>
        <fullName evidence="1">o-succinylbenzoic acid synthase</fullName>
    </alternativeName>
</protein>
<comment type="function">
    <text evidence="1">Converts 2-succinyl-6-hydroxy-2,4-cyclohexadiene-1-carboxylate (SHCHC) to 2-succinylbenzoate (OSB).</text>
</comment>
<comment type="catalytic activity">
    <reaction evidence="1">
        <text>(1R,6R)-6-hydroxy-2-succinyl-cyclohexa-2,4-diene-1-carboxylate = 2-succinylbenzoate + H2O</text>
        <dbReference type="Rhea" id="RHEA:10196"/>
        <dbReference type="ChEBI" id="CHEBI:15377"/>
        <dbReference type="ChEBI" id="CHEBI:18325"/>
        <dbReference type="ChEBI" id="CHEBI:58689"/>
        <dbReference type="EC" id="4.2.1.113"/>
    </reaction>
</comment>
<comment type="cofactor">
    <cofactor evidence="1">
        <name>a divalent metal cation</name>
        <dbReference type="ChEBI" id="CHEBI:60240"/>
    </cofactor>
</comment>
<comment type="pathway">
    <text evidence="1">Quinol/quinone metabolism; 1,4-dihydroxy-2-naphthoate biosynthesis; 1,4-dihydroxy-2-naphthoate from chorismate: step 4/7.</text>
</comment>
<comment type="pathway">
    <text evidence="1">Quinol/quinone metabolism; menaquinone biosynthesis.</text>
</comment>
<comment type="similarity">
    <text evidence="1">Belongs to the mandelate racemase/muconate lactonizing enzyme family. MenC type 1 subfamily.</text>
</comment>
<gene>
    <name evidence="1" type="primary">menC</name>
    <name type="ordered locus">MSMEG_1103</name>
    <name type="ordered locus">MSMEI_1070</name>
</gene>
<organism>
    <name type="scientific">Mycolicibacterium smegmatis (strain ATCC 700084 / mc(2)155)</name>
    <name type="common">Mycobacterium smegmatis</name>
    <dbReference type="NCBI Taxonomy" id="246196"/>
    <lineage>
        <taxon>Bacteria</taxon>
        <taxon>Bacillati</taxon>
        <taxon>Actinomycetota</taxon>
        <taxon>Actinomycetes</taxon>
        <taxon>Mycobacteriales</taxon>
        <taxon>Mycobacteriaceae</taxon>
        <taxon>Mycolicibacterium</taxon>
    </lineage>
</organism>
<name>MENC_MYCS2</name>
<sequence length="321" mass="33686">MTNGVPALDDILERLHVVALPMRVRFRGITVRELALIDGPAGWGEFGAFVEYEPPEAAAWLSSALEAAYRPAPAALRDRVPINATVPAVSAERVPEVLARFPGARTAKVKVAEPGQSLADDVARVNAVRESVPVVRVDANGGWSVDDAVEAAAALTADGELEYLEQPCATVEELAALRARVDVPIAADESIRKAEDPLRVVRAHAADIAVLKVAPLGGVARMLDIAAQIDIPIVVSSALDSSVGIGRGLLAAAALPELRHACGLGTGGLFVDDVAEPRVPVDGCLAVEPAVPDPARLAALAAPEPRRQWWIDRVCACHALI</sequence>
<evidence type="ECO:0000255" key="1">
    <source>
        <dbReference type="HAMAP-Rule" id="MF_00470"/>
    </source>
</evidence>
<keyword id="KW-0456">Lyase</keyword>
<keyword id="KW-0460">Magnesium</keyword>
<keyword id="KW-0474">Menaquinone biosynthesis</keyword>
<keyword id="KW-0479">Metal-binding</keyword>
<keyword id="KW-1185">Reference proteome</keyword>
<reference key="1">
    <citation type="submission" date="2006-10" db="EMBL/GenBank/DDBJ databases">
        <authorList>
            <person name="Fleischmann R.D."/>
            <person name="Dodson R.J."/>
            <person name="Haft D.H."/>
            <person name="Merkel J.S."/>
            <person name="Nelson W.C."/>
            <person name="Fraser C.M."/>
        </authorList>
    </citation>
    <scope>NUCLEOTIDE SEQUENCE [LARGE SCALE GENOMIC DNA]</scope>
    <source>
        <strain>ATCC 700084 / mc(2)155</strain>
    </source>
</reference>
<reference key="2">
    <citation type="journal article" date="2007" name="Genome Biol.">
        <title>Interrupted coding sequences in Mycobacterium smegmatis: authentic mutations or sequencing errors?</title>
        <authorList>
            <person name="Deshayes C."/>
            <person name="Perrodou E."/>
            <person name="Gallien S."/>
            <person name="Euphrasie D."/>
            <person name="Schaeffer C."/>
            <person name="Van-Dorsselaer A."/>
            <person name="Poch O."/>
            <person name="Lecompte O."/>
            <person name="Reyrat J.-M."/>
        </authorList>
    </citation>
    <scope>NUCLEOTIDE SEQUENCE [LARGE SCALE GENOMIC DNA]</scope>
    <source>
        <strain>ATCC 700084 / mc(2)155</strain>
    </source>
</reference>
<reference key="3">
    <citation type="journal article" date="2009" name="Genome Res.">
        <title>Ortho-proteogenomics: multiple proteomes investigation through orthology and a new MS-based protocol.</title>
        <authorList>
            <person name="Gallien S."/>
            <person name="Perrodou E."/>
            <person name="Carapito C."/>
            <person name="Deshayes C."/>
            <person name="Reyrat J.-M."/>
            <person name="Van Dorsselaer A."/>
            <person name="Poch O."/>
            <person name="Schaeffer C."/>
            <person name="Lecompte O."/>
        </authorList>
    </citation>
    <scope>NUCLEOTIDE SEQUENCE [LARGE SCALE GENOMIC DNA]</scope>
    <source>
        <strain>ATCC 700084 / mc(2)155</strain>
    </source>
</reference>
<feature type="chain" id="PRO_1000013805" description="o-succinylbenzoate synthase">
    <location>
        <begin position="1"/>
        <end position="321"/>
    </location>
</feature>
<feature type="active site" description="Proton donor" evidence="1">
    <location>
        <position position="110"/>
    </location>
</feature>
<feature type="active site" description="Proton acceptor" evidence="1">
    <location>
        <position position="212"/>
    </location>
</feature>
<feature type="binding site" evidence="1">
    <location>
        <position position="138"/>
    </location>
    <ligand>
        <name>Mg(2+)</name>
        <dbReference type="ChEBI" id="CHEBI:18420"/>
    </ligand>
</feature>
<feature type="binding site" evidence="1">
    <location>
        <position position="165"/>
    </location>
    <ligand>
        <name>Mg(2+)</name>
        <dbReference type="ChEBI" id="CHEBI:18420"/>
    </ligand>
</feature>
<feature type="binding site" evidence="1">
    <location>
        <position position="188"/>
    </location>
    <ligand>
        <name>Mg(2+)</name>
        <dbReference type="ChEBI" id="CHEBI:18420"/>
    </ligand>
</feature>